<proteinExistence type="inferred from homology"/>
<reference key="1">
    <citation type="journal article" date="2004" name="Science">
        <title>The 1.2-megabase genome sequence of Mimivirus.</title>
        <authorList>
            <person name="Raoult D."/>
            <person name="Audic S."/>
            <person name="Robert C."/>
            <person name="Abergel C."/>
            <person name="Renesto P."/>
            <person name="Ogata H."/>
            <person name="La Scola B."/>
            <person name="Susan M."/>
            <person name="Claverie J.-M."/>
        </authorList>
    </citation>
    <scope>NUCLEOTIDE SEQUENCE [LARGE SCALE GENOMIC DNA]</scope>
    <source>
        <strain>Rowbotham-Bradford</strain>
    </source>
</reference>
<accession>Q5URA8</accession>
<organismHost>
    <name type="scientific">Acanthamoeba polyphaga</name>
    <name type="common">Amoeba</name>
    <dbReference type="NCBI Taxonomy" id="5757"/>
</organismHost>
<gene>
    <name type="ordered locus">MIMI_L876</name>
</gene>
<sequence length="413" mass="49283">MEKYTVCLCGDCINKKNFLKHCQVIDNNCYIAISNELVDIKFDEYIEHGEFFGEKFYQKSHCIMIDFENILKFNSFMADNKLFTVISHCETPCNYSRFVINYLEYITKNNIINHIKYFLKNDYFNNIRWNCHLREKIFKYSNVSTIRSCLKYLPIEYIGEYFSYSLFRGDNIILDYLVDKIKIYLTSYFTGKKYKGNMFKITNKDKLIDISNIYTRLYNIIYYNKKNENIIEIYNQIINRFQELLESQENINVKKKLIFKHNELKLKLTYNEKVKNRLLGNILVYLNGKPSLIVKQLLMDGVNIHTINRDNGFTFLDYFIKIIIKKKNLDLLDILFEMKLIDQSKLNLILEKSIPPIDFKNDTELEIDKNFIRELSGYGADVDKCFDELIKTAKYYNNNKLVGYLKNLGDDLM</sequence>
<comment type="similarity">
    <text evidence="1">Belongs to the mimivirus L17x/L18x family.</text>
</comment>
<name>YL876_MIMIV</name>
<protein>
    <recommendedName>
        <fullName>Uncharacterized protein L876</fullName>
    </recommendedName>
</protein>
<organism>
    <name type="scientific">Acanthamoeba polyphaga mimivirus</name>
    <name type="common">APMV</name>
    <dbReference type="NCBI Taxonomy" id="212035"/>
    <lineage>
        <taxon>Viruses</taxon>
        <taxon>Varidnaviria</taxon>
        <taxon>Bamfordvirae</taxon>
        <taxon>Nucleocytoviricota</taxon>
        <taxon>Megaviricetes</taxon>
        <taxon>Imitervirales</taxon>
        <taxon>Mimiviridae</taxon>
        <taxon>Megamimivirinae</taxon>
        <taxon>Mimivirus</taxon>
        <taxon>Mimivirus bradfordmassiliense</taxon>
    </lineage>
</organism>
<feature type="chain" id="PRO_0000071384" description="Uncharacterized protein L876">
    <location>
        <begin position="1"/>
        <end position="413"/>
    </location>
</feature>
<keyword id="KW-1185">Reference proteome</keyword>
<dbReference type="EMBL" id="AY653733">
    <property type="protein sequence ID" value="AAV51134.1"/>
    <property type="molecule type" value="Genomic_DNA"/>
</dbReference>
<dbReference type="SMR" id="Q5URA8"/>
<dbReference type="KEGG" id="vg:9925543"/>
<dbReference type="Proteomes" id="UP000001134">
    <property type="component" value="Genome"/>
</dbReference>
<evidence type="ECO:0000305" key="1"/>